<evidence type="ECO:0000250" key="1"/>
<evidence type="ECO:0000256" key="2">
    <source>
        <dbReference type="SAM" id="MobiDB-lite"/>
    </source>
</evidence>
<evidence type="ECO:0000305" key="3"/>
<name>IF4E3_WHEAT</name>
<accession>A3RCV9</accession>
<organism>
    <name type="scientific">Triticum aestivum</name>
    <name type="common">Wheat</name>
    <dbReference type="NCBI Taxonomy" id="4565"/>
    <lineage>
        <taxon>Eukaryota</taxon>
        <taxon>Viridiplantae</taxon>
        <taxon>Streptophyta</taxon>
        <taxon>Embryophyta</taxon>
        <taxon>Tracheophyta</taxon>
        <taxon>Spermatophyta</taxon>
        <taxon>Magnoliopsida</taxon>
        <taxon>Liliopsida</taxon>
        <taxon>Poales</taxon>
        <taxon>Poaceae</taxon>
        <taxon>BOP clade</taxon>
        <taxon>Pooideae</taxon>
        <taxon>Triticodae</taxon>
        <taxon>Triticeae</taxon>
        <taxon>Triticinae</taxon>
        <taxon>Triticum</taxon>
    </lineage>
</organism>
<gene>
    <name type="primary">NCBP</name>
</gene>
<dbReference type="EMBL" id="EF190327">
    <property type="protein sequence ID" value="ABO15890.1"/>
    <property type="molecule type" value="mRNA"/>
</dbReference>
<dbReference type="SMR" id="A3RCV9"/>
<dbReference type="STRING" id="4565.A3RCV9"/>
<dbReference type="PaxDb" id="4565-Traes_4BL_96D26EBE3.2"/>
<dbReference type="EnsemblPlants" id="TraesARI4D03G02552470.1">
    <property type="protein sequence ID" value="TraesARI4D03G02552470.1"/>
    <property type="gene ID" value="TraesARI4D03G02552470"/>
</dbReference>
<dbReference type="EnsemblPlants" id="TraesCAD_scaffold_029241_01G000100.1">
    <property type="protein sequence ID" value="TraesCAD_scaffold_029241_01G000100.1"/>
    <property type="gene ID" value="TraesCAD_scaffold_029241_01G000100"/>
</dbReference>
<dbReference type="EnsemblPlants" id="TraesCLE_scaffold_039793_01G000100.1">
    <property type="protein sequence ID" value="TraesCLE_scaffold_039793_01G000100.1"/>
    <property type="gene ID" value="TraesCLE_scaffold_039793_01G000100"/>
</dbReference>
<dbReference type="EnsemblPlants" id="TraesCS4D02G216800.1">
    <property type="protein sequence ID" value="TraesCS4D02G216800.1"/>
    <property type="gene ID" value="TraesCS4D02G216800"/>
</dbReference>
<dbReference type="EnsemblPlants" id="TraesJAG4D03G02510720.1">
    <property type="protein sequence ID" value="TraesJAG4D03G02510720.1"/>
    <property type="gene ID" value="TraesJAG4D03G02510720"/>
</dbReference>
<dbReference type="EnsemblPlants" id="TraesJUL4D03G02532400.1">
    <property type="protein sequence ID" value="TraesJUL4D03G02532400.1"/>
    <property type="gene ID" value="TraesJUL4D03G02532400"/>
</dbReference>
<dbReference type="EnsemblPlants" id="TraesKAR4D01G0266460.1">
    <property type="protein sequence ID" value="cds.TraesKAR4D01G0266460.1"/>
    <property type="gene ID" value="TraesKAR4D01G0266460"/>
</dbReference>
<dbReference type="EnsemblPlants" id="TraesLAC4D03G02466670.1">
    <property type="protein sequence ID" value="TraesLAC4D03G02466670.1"/>
    <property type="gene ID" value="TraesLAC4D03G02466670"/>
</dbReference>
<dbReference type="EnsemblPlants" id="TraesLDM4D03G02515710.1">
    <property type="protein sequence ID" value="TraesLDM4D03G02515710.1"/>
    <property type="gene ID" value="TraesLDM4D03G02515710"/>
</dbReference>
<dbReference type="EnsemblPlants" id="TraesMAC4D03G02511320.1">
    <property type="protein sequence ID" value="TraesMAC4D03G02511320.1"/>
    <property type="gene ID" value="TraesMAC4D03G02511320"/>
</dbReference>
<dbReference type="EnsemblPlants" id="TraesNOR4D03G02530700.1">
    <property type="protein sequence ID" value="TraesNOR4D03G02530700.1"/>
    <property type="gene ID" value="TraesNOR4D03G02530700"/>
</dbReference>
<dbReference type="EnsemblPlants" id="TraesPARA_EIv1.0_1464960.1">
    <property type="protein sequence ID" value="TraesPARA_EIv1.0_1464960.1.CDS"/>
    <property type="gene ID" value="TraesPARA_EIv1.0_1464960"/>
</dbReference>
<dbReference type="EnsemblPlants" id="TraesROB_scaffold_015865_01G000200.1">
    <property type="protein sequence ID" value="TraesROB_scaffold_015865_01G000200.1"/>
    <property type="gene ID" value="TraesROB_scaffold_015865_01G000200"/>
</dbReference>
<dbReference type="EnsemblPlants" id="TraesSTA4D03G02508490.1">
    <property type="protein sequence ID" value="TraesSTA4D03G02508490.1"/>
    <property type="gene ID" value="TraesSTA4D03G02508490"/>
</dbReference>
<dbReference type="EnsemblPlants" id="TraesSYM4D03G02541370.1">
    <property type="protein sequence ID" value="TraesSYM4D03G02541370.1"/>
    <property type="gene ID" value="TraesSYM4D03G02541370"/>
</dbReference>
<dbReference type="EnsemblPlants" id="TraesWEE_scaffold_035966_01G000100.1">
    <property type="protein sequence ID" value="TraesWEE_scaffold_035966_01G000100.1"/>
    <property type="gene ID" value="TraesWEE_scaffold_035966_01G000100"/>
</dbReference>
<dbReference type="Gramene" id="TraesARI4D03G02552470.1">
    <property type="protein sequence ID" value="TraesARI4D03G02552470.1"/>
    <property type="gene ID" value="TraesARI4D03G02552470"/>
</dbReference>
<dbReference type="Gramene" id="TraesCAD_scaffold_029241_01G000100.1">
    <property type="protein sequence ID" value="TraesCAD_scaffold_029241_01G000100.1"/>
    <property type="gene ID" value="TraesCAD_scaffold_029241_01G000100"/>
</dbReference>
<dbReference type="Gramene" id="TraesCLE_scaffold_039793_01G000100.1">
    <property type="protein sequence ID" value="TraesCLE_scaffold_039793_01G000100.1"/>
    <property type="gene ID" value="TraesCLE_scaffold_039793_01G000100"/>
</dbReference>
<dbReference type="Gramene" id="TraesCS4D02G216800.1">
    <property type="protein sequence ID" value="TraesCS4D02G216800.1"/>
    <property type="gene ID" value="TraesCS4D02G216800"/>
</dbReference>
<dbReference type="Gramene" id="TraesJAG4D03G02510720.1">
    <property type="protein sequence ID" value="TraesJAG4D03G02510720.1"/>
    <property type="gene ID" value="TraesJAG4D03G02510720"/>
</dbReference>
<dbReference type="Gramene" id="TraesJUL4D03G02532400.1">
    <property type="protein sequence ID" value="TraesJUL4D03G02532400.1"/>
    <property type="gene ID" value="TraesJUL4D03G02532400"/>
</dbReference>
<dbReference type="Gramene" id="TraesKAR4D01G0266460.1">
    <property type="protein sequence ID" value="cds.TraesKAR4D01G0266460.1"/>
    <property type="gene ID" value="TraesKAR4D01G0266460"/>
</dbReference>
<dbReference type="Gramene" id="TraesLAC4D03G02466670.1">
    <property type="protein sequence ID" value="TraesLAC4D03G02466670.1"/>
    <property type="gene ID" value="TraesLAC4D03G02466670"/>
</dbReference>
<dbReference type="Gramene" id="TraesLDM4D03G02515710.1">
    <property type="protein sequence ID" value="TraesLDM4D03G02515710.1"/>
    <property type="gene ID" value="TraesLDM4D03G02515710"/>
</dbReference>
<dbReference type="Gramene" id="TraesMAC4D03G02511320.1">
    <property type="protein sequence ID" value="TraesMAC4D03G02511320.1"/>
    <property type="gene ID" value="TraesMAC4D03G02511320"/>
</dbReference>
<dbReference type="Gramene" id="TraesNOR4D03G02530700.1">
    <property type="protein sequence ID" value="TraesNOR4D03G02530700.1"/>
    <property type="gene ID" value="TraesNOR4D03G02530700"/>
</dbReference>
<dbReference type="Gramene" id="TraesPARA_EIv1.0_1464960.1">
    <property type="protein sequence ID" value="TraesPARA_EIv1.0_1464960.1.CDS"/>
    <property type="gene ID" value="TraesPARA_EIv1.0_1464960"/>
</dbReference>
<dbReference type="Gramene" id="TraesROB_scaffold_015865_01G000200.1">
    <property type="protein sequence ID" value="TraesROB_scaffold_015865_01G000200.1"/>
    <property type="gene ID" value="TraesROB_scaffold_015865_01G000200"/>
</dbReference>
<dbReference type="Gramene" id="TraesSTA4D03G02508490.1">
    <property type="protein sequence ID" value="TraesSTA4D03G02508490.1"/>
    <property type="gene ID" value="TraesSTA4D03G02508490"/>
</dbReference>
<dbReference type="Gramene" id="TraesSYM4D03G02541370.1">
    <property type="protein sequence ID" value="TraesSYM4D03G02541370.1"/>
    <property type="gene ID" value="TraesSYM4D03G02541370"/>
</dbReference>
<dbReference type="Gramene" id="TraesWEE_scaffold_035966_01G000100.1">
    <property type="protein sequence ID" value="TraesWEE_scaffold_035966_01G000100.1"/>
    <property type="gene ID" value="TraesWEE_scaffold_035966_01G000100"/>
</dbReference>
<dbReference type="eggNOG" id="KOG1669">
    <property type="taxonomic scope" value="Eukaryota"/>
</dbReference>
<dbReference type="OMA" id="VWNKTAN"/>
<dbReference type="OrthoDB" id="590761at2759"/>
<dbReference type="Proteomes" id="UP000019116">
    <property type="component" value="Chromosome 4D"/>
</dbReference>
<dbReference type="GO" id="GO:0016281">
    <property type="term" value="C:eukaryotic translation initiation factor 4F complex"/>
    <property type="evidence" value="ECO:0000318"/>
    <property type="project" value="GO_Central"/>
</dbReference>
<dbReference type="GO" id="GO:0000340">
    <property type="term" value="F:RNA 7-methylguanosine cap binding"/>
    <property type="evidence" value="ECO:0000318"/>
    <property type="project" value="GO_Central"/>
</dbReference>
<dbReference type="GO" id="GO:0003743">
    <property type="term" value="F:translation initiation factor activity"/>
    <property type="evidence" value="ECO:0000318"/>
    <property type="project" value="GO_Central"/>
</dbReference>
<dbReference type="GO" id="GO:0006417">
    <property type="term" value="P:regulation of translation"/>
    <property type="evidence" value="ECO:0007669"/>
    <property type="project" value="UniProtKB-KW"/>
</dbReference>
<dbReference type="GO" id="GO:0006413">
    <property type="term" value="P:translational initiation"/>
    <property type="evidence" value="ECO:0000318"/>
    <property type="project" value="GO_Central"/>
</dbReference>
<dbReference type="FunFam" id="3.30.760.10:FF:000008">
    <property type="entry name" value="Eukaryotic translation initiation factor NCBP"/>
    <property type="match status" value="1"/>
</dbReference>
<dbReference type="Gene3D" id="3.30.760.10">
    <property type="entry name" value="RNA Cap, Translation Initiation Factor Eif4e"/>
    <property type="match status" value="1"/>
</dbReference>
<dbReference type="InterPro" id="IPR023398">
    <property type="entry name" value="TIF_eIF4e-like"/>
</dbReference>
<dbReference type="InterPro" id="IPR001040">
    <property type="entry name" value="TIF_eIF_4E"/>
</dbReference>
<dbReference type="InterPro" id="IPR019770">
    <property type="entry name" value="TIF_eIF_4E_CS"/>
</dbReference>
<dbReference type="PANTHER" id="PTHR11960:SF18">
    <property type="entry name" value="EUKARYOTIC TRANSLATION INITIATION FACTOR 4E HOMOLOGOUS PROTEIN, ISOFORM B"/>
    <property type="match status" value="1"/>
</dbReference>
<dbReference type="PANTHER" id="PTHR11960">
    <property type="entry name" value="EUKARYOTIC TRANSLATION INITIATION FACTOR 4E RELATED"/>
    <property type="match status" value="1"/>
</dbReference>
<dbReference type="Pfam" id="PF01652">
    <property type="entry name" value="IF4E"/>
    <property type="match status" value="1"/>
</dbReference>
<dbReference type="SUPFAM" id="SSF55418">
    <property type="entry name" value="eIF4e-like"/>
    <property type="match status" value="1"/>
</dbReference>
<dbReference type="PROSITE" id="PS00813">
    <property type="entry name" value="IF4E"/>
    <property type="match status" value="1"/>
</dbReference>
<reference key="1">
    <citation type="journal article" date="2007" name="Methods Enzymol.">
        <title>Expression and purification of recombinant wheat translation initiation factors eIF1, eIF1A, eIF4A, eIF4B, eIF4F, eIF(iso)4F, and eIF5.</title>
        <authorList>
            <person name="Mayberry L.K."/>
            <person name="Dennis M.D."/>
            <person name="Leah Allen M."/>
            <person name="Ruud Nitka K."/>
            <person name="Murphy P.A."/>
            <person name="Campbell L."/>
            <person name="Browning K.S."/>
        </authorList>
    </citation>
    <scope>NUCLEOTIDE SEQUENCE [MRNA]</scope>
    <source>
        <strain>cv. Chinese Spring</strain>
    </source>
</reference>
<keyword id="KW-0396">Initiation factor</keyword>
<keyword id="KW-0648">Protein biosynthesis</keyword>
<keyword id="KW-1185">Reference proteome</keyword>
<keyword id="KW-0694">RNA-binding</keyword>
<keyword id="KW-0810">Translation regulation</keyword>
<feature type="chain" id="PRO_0000420541" description="Eukaryotic translation initiation factor NCBP">
    <location>
        <begin position="1"/>
        <end position="232"/>
    </location>
</feature>
<feature type="region of interest" description="Disordered" evidence="2">
    <location>
        <begin position="1"/>
        <end position="49"/>
    </location>
</feature>
<feature type="compositionally biased region" description="Basic and acidic residues" evidence="2">
    <location>
        <begin position="1"/>
        <end position="11"/>
    </location>
</feature>
<feature type="compositionally biased region" description="Acidic residues" evidence="2">
    <location>
        <begin position="31"/>
        <end position="41"/>
    </location>
</feature>
<protein>
    <recommendedName>
        <fullName>Eukaryotic translation initiation factor NCBP</fullName>
    </recommendedName>
    <alternativeName>
        <fullName>Novel cap-binding protein</fullName>
        <shortName>nCBP</shortName>
    </alternativeName>
    <alternativeName>
        <fullName>mRNA cap-binding protein</fullName>
    </alternativeName>
</protein>
<sequence length="232" mass="26998">MEPAVERKVPEQEEQLQPSHARAEDAPPAAVEEEDEAEAEESERRNRELKAGLHPLRRKLVLWYTRRTPGTRSQSYEDNIKKIVDFSTVESFWVCYCHLARPSSLPSPTDLHLFKEGVRPLWEDPANRNGGKWIIRFKKAVSGRFWEDLVLVLVGDQLDYSDDVCGIVLSCRFNEDILSVWNRNASDHQAVMTLRDSIKRHLKLPHTYLMEYKPHDASLRDNSSYRNTWLRG</sequence>
<proteinExistence type="evidence at transcript level"/>
<comment type="function">
    <text evidence="1">Recognizes and binds the 7-methylguanosine-containing mRNA cap during an early step in the initiation of protein synthesis and facilitates ribosome binding by inducing the unwinding of the mRNAs secondary structures.</text>
</comment>
<comment type="subunit">
    <text evidence="1">EIF4F is a multi-subunit complex, the composition of which varies with external and internal environmental conditions. It is composed of at least EIF4A, EIF4E and EIF4G. EIF4E is also known to interact with other partners. In higher plants two isoforms of EIF4F have been identified, named isoform EIF4F and isoform EIF(iso)4F. Isoform EIF4F has subunits p220 and p26, whereas isoform EIF(iso)4F has subunits p82 and p28 (By similarity).</text>
</comment>
<comment type="similarity">
    <text evidence="3">Belongs to the eukaryotic initiation factor 4E family.</text>
</comment>